<accession>B7HS32</accession>
<reference key="1">
    <citation type="submission" date="2008-10" db="EMBL/GenBank/DDBJ databases">
        <title>Genome sequence of Bacillus cereus AH187.</title>
        <authorList>
            <person name="Dodson R.J."/>
            <person name="Durkin A.S."/>
            <person name="Rosovitz M.J."/>
            <person name="Rasko D.A."/>
            <person name="Kolsto A.B."/>
            <person name="Okstad O.A."/>
            <person name="Ravel J."/>
            <person name="Sutton G."/>
        </authorList>
    </citation>
    <scope>NUCLEOTIDE SEQUENCE [LARGE SCALE GENOMIC DNA]</scope>
    <source>
        <strain>AH187</strain>
    </source>
</reference>
<feature type="chain" id="PRO_1000194818" description="Phosphoribosylformylglycinamidine synthase subunit PurL">
    <location>
        <begin position="1"/>
        <end position="739"/>
    </location>
</feature>
<feature type="active site" evidence="1">
    <location>
        <position position="54"/>
    </location>
</feature>
<feature type="active site" description="Proton acceptor" evidence="1">
    <location>
        <position position="100"/>
    </location>
</feature>
<feature type="binding site" evidence="1">
    <location>
        <position position="57"/>
    </location>
    <ligand>
        <name>ATP</name>
        <dbReference type="ChEBI" id="CHEBI:30616"/>
    </ligand>
</feature>
<feature type="binding site" evidence="1">
    <location>
        <position position="96"/>
    </location>
    <ligand>
        <name>ATP</name>
        <dbReference type="ChEBI" id="CHEBI:30616"/>
    </ligand>
</feature>
<feature type="binding site" evidence="1">
    <location>
        <position position="98"/>
    </location>
    <ligand>
        <name>Mg(2+)</name>
        <dbReference type="ChEBI" id="CHEBI:18420"/>
        <label>1</label>
    </ligand>
</feature>
<feature type="binding site" evidence="1">
    <location>
        <begin position="99"/>
        <end position="102"/>
    </location>
    <ligand>
        <name>substrate</name>
    </ligand>
</feature>
<feature type="binding site" evidence="1">
    <location>
        <position position="121"/>
    </location>
    <ligand>
        <name>substrate</name>
    </ligand>
</feature>
<feature type="binding site" evidence="1">
    <location>
        <position position="122"/>
    </location>
    <ligand>
        <name>Mg(2+)</name>
        <dbReference type="ChEBI" id="CHEBI:18420"/>
        <label>2</label>
    </ligand>
</feature>
<feature type="binding site" evidence="1">
    <location>
        <position position="245"/>
    </location>
    <ligand>
        <name>substrate</name>
    </ligand>
</feature>
<feature type="binding site" evidence="1">
    <location>
        <position position="273"/>
    </location>
    <ligand>
        <name>Mg(2+)</name>
        <dbReference type="ChEBI" id="CHEBI:18420"/>
        <label>2</label>
    </ligand>
</feature>
<feature type="binding site" evidence="1">
    <location>
        <begin position="317"/>
        <end position="319"/>
    </location>
    <ligand>
        <name>substrate</name>
    </ligand>
</feature>
<feature type="binding site" evidence="1">
    <location>
        <position position="500"/>
    </location>
    <ligand>
        <name>ATP</name>
        <dbReference type="ChEBI" id="CHEBI:30616"/>
    </ligand>
</feature>
<feature type="binding site" evidence="1">
    <location>
        <position position="537"/>
    </location>
    <ligand>
        <name>ATP</name>
        <dbReference type="ChEBI" id="CHEBI:30616"/>
    </ligand>
</feature>
<feature type="binding site" evidence="1">
    <location>
        <position position="538"/>
    </location>
    <ligand>
        <name>Mg(2+)</name>
        <dbReference type="ChEBI" id="CHEBI:18420"/>
        <label>1</label>
    </ligand>
</feature>
<feature type="binding site" evidence="1">
    <location>
        <position position="540"/>
    </location>
    <ligand>
        <name>substrate</name>
    </ligand>
</feature>
<keyword id="KW-0067">ATP-binding</keyword>
<keyword id="KW-0963">Cytoplasm</keyword>
<keyword id="KW-0436">Ligase</keyword>
<keyword id="KW-0460">Magnesium</keyword>
<keyword id="KW-0479">Metal-binding</keyword>
<keyword id="KW-0547">Nucleotide-binding</keyword>
<keyword id="KW-0658">Purine biosynthesis</keyword>
<proteinExistence type="inferred from homology"/>
<dbReference type="EC" id="6.3.5.3" evidence="1"/>
<dbReference type="EMBL" id="CP001177">
    <property type="protein sequence ID" value="ACJ81786.1"/>
    <property type="molecule type" value="Genomic_DNA"/>
</dbReference>
<dbReference type="SMR" id="B7HS32"/>
<dbReference type="KEGG" id="bcr:BCAH187_A0367"/>
<dbReference type="HOGENOM" id="CLU_003100_0_1_9"/>
<dbReference type="UniPathway" id="UPA00074">
    <property type="reaction ID" value="UER00128"/>
</dbReference>
<dbReference type="Proteomes" id="UP000002214">
    <property type="component" value="Chromosome"/>
</dbReference>
<dbReference type="GO" id="GO:0005737">
    <property type="term" value="C:cytoplasm"/>
    <property type="evidence" value="ECO:0007669"/>
    <property type="project" value="UniProtKB-SubCell"/>
</dbReference>
<dbReference type="GO" id="GO:0005524">
    <property type="term" value="F:ATP binding"/>
    <property type="evidence" value="ECO:0007669"/>
    <property type="project" value="UniProtKB-UniRule"/>
</dbReference>
<dbReference type="GO" id="GO:0000287">
    <property type="term" value="F:magnesium ion binding"/>
    <property type="evidence" value="ECO:0007669"/>
    <property type="project" value="UniProtKB-UniRule"/>
</dbReference>
<dbReference type="GO" id="GO:0004642">
    <property type="term" value="F:phosphoribosylformylglycinamidine synthase activity"/>
    <property type="evidence" value="ECO:0007669"/>
    <property type="project" value="UniProtKB-UniRule"/>
</dbReference>
<dbReference type="GO" id="GO:0006189">
    <property type="term" value="P:'de novo' IMP biosynthetic process"/>
    <property type="evidence" value="ECO:0007669"/>
    <property type="project" value="UniProtKB-UniRule"/>
</dbReference>
<dbReference type="CDD" id="cd02203">
    <property type="entry name" value="PurL_repeat1"/>
    <property type="match status" value="1"/>
</dbReference>
<dbReference type="CDD" id="cd02204">
    <property type="entry name" value="PurL_repeat2"/>
    <property type="match status" value="1"/>
</dbReference>
<dbReference type="FunFam" id="3.30.1330.10:FF:000004">
    <property type="entry name" value="Phosphoribosylformylglycinamidine synthase subunit PurL"/>
    <property type="match status" value="1"/>
</dbReference>
<dbReference type="FunFam" id="3.30.1330.10:FF:000011">
    <property type="entry name" value="Phosphoribosylformylglycinamidine synthase subunit PurL"/>
    <property type="match status" value="1"/>
</dbReference>
<dbReference type="FunFam" id="3.90.650.10:FF:000009">
    <property type="entry name" value="Phosphoribosylformylglycinamidine synthase subunit PurL"/>
    <property type="match status" value="1"/>
</dbReference>
<dbReference type="FunFam" id="3.90.650.10:FF:000013">
    <property type="entry name" value="Phosphoribosylformylglycinamidine synthase subunit PurL"/>
    <property type="match status" value="1"/>
</dbReference>
<dbReference type="Gene3D" id="3.90.650.10">
    <property type="entry name" value="PurM-like C-terminal domain"/>
    <property type="match status" value="2"/>
</dbReference>
<dbReference type="Gene3D" id="3.30.1330.10">
    <property type="entry name" value="PurM-like, N-terminal domain"/>
    <property type="match status" value="2"/>
</dbReference>
<dbReference type="HAMAP" id="MF_00420">
    <property type="entry name" value="PurL_2"/>
    <property type="match status" value="1"/>
</dbReference>
<dbReference type="InterPro" id="IPR010074">
    <property type="entry name" value="PRibForGlyAmidine_synth_PurL"/>
</dbReference>
<dbReference type="InterPro" id="IPR041609">
    <property type="entry name" value="PurL_linker"/>
</dbReference>
<dbReference type="InterPro" id="IPR010918">
    <property type="entry name" value="PurM-like_C_dom"/>
</dbReference>
<dbReference type="InterPro" id="IPR036676">
    <property type="entry name" value="PurM-like_C_sf"/>
</dbReference>
<dbReference type="InterPro" id="IPR016188">
    <property type="entry name" value="PurM-like_N"/>
</dbReference>
<dbReference type="InterPro" id="IPR036921">
    <property type="entry name" value="PurM-like_N_sf"/>
</dbReference>
<dbReference type="NCBIfam" id="TIGR01736">
    <property type="entry name" value="FGAM_synth_II"/>
    <property type="match status" value="1"/>
</dbReference>
<dbReference type="NCBIfam" id="NF002290">
    <property type="entry name" value="PRK01213.1"/>
    <property type="match status" value="1"/>
</dbReference>
<dbReference type="PANTHER" id="PTHR43555">
    <property type="entry name" value="PHOSPHORIBOSYLFORMYLGLYCINAMIDINE SYNTHASE SUBUNIT PURL"/>
    <property type="match status" value="1"/>
</dbReference>
<dbReference type="PANTHER" id="PTHR43555:SF1">
    <property type="entry name" value="PHOSPHORIBOSYLFORMYLGLYCINAMIDINE SYNTHASE SUBUNIT PURL"/>
    <property type="match status" value="1"/>
</dbReference>
<dbReference type="Pfam" id="PF00586">
    <property type="entry name" value="AIRS"/>
    <property type="match status" value="2"/>
</dbReference>
<dbReference type="Pfam" id="PF02769">
    <property type="entry name" value="AIRS_C"/>
    <property type="match status" value="2"/>
</dbReference>
<dbReference type="Pfam" id="PF18072">
    <property type="entry name" value="FGAR-AT_linker"/>
    <property type="match status" value="1"/>
</dbReference>
<dbReference type="PIRSF" id="PIRSF001587">
    <property type="entry name" value="FGAM_synthase_II"/>
    <property type="match status" value="1"/>
</dbReference>
<dbReference type="SUPFAM" id="SSF56042">
    <property type="entry name" value="PurM C-terminal domain-like"/>
    <property type="match status" value="2"/>
</dbReference>
<dbReference type="SUPFAM" id="SSF55326">
    <property type="entry name" value="PurM N-terminal domain-like"/>
    <property type="match status" value="2"/>
</dbReference>
<gene>
    <name evidence="1" type="primary">purL</name>
    <name type="ordered locus">BCAH187_A0367</name>
</gene>
<organism>
    <name type="scientific">Bacillus cereus (strain AH187)</name>
    <dbReference type="NCBI Taxonomy" id="405534"/>
    <lineage>
        <taxon>Bacteria</taxon>
        <taxon>Bacillati</taxon>
        <taxon>Bacillota</taxon>
        <taxon>Bacilli</taxon>
        <taxon>Bacillales</taxon>
        <taxon>Bacillaceae</taxon>
        <taxon>Bacillus</taxon>
        <taxon>Bacillus cereus group</taxon>
    </lineage>
</organism>
<sequence>MSLMLEPNPTQIKEERIYAEMGLTDEEFAMVEKILGRLPNYTETGLFSVMWSEHCSYKNSKPVLRKFPTTGERVLQGPGEGAGIVDIGDNQAVVFKMESHNHPSAIEPYQGAATGVGGIIRDVFSMGARPVALLNSLRFGELQSPRVKYLFEEVVAGIAGYGNCIGIPTVGGEVQFDPCYEGNPLVNAMCVGLINHEDIKKGQAHGAGNTVMYVGASTGRDGIHGATFASEELSESSEAKRPAVQVGDPFMEKLLIEACLELIQSDALVGIQDMGAAGLTSSSAEMASKAGMGIEMYLDDVPQRETGMTPYEMMLSESQERMLIVVKKGREQEIVDLFEKYGLAAVTMGKVTEDKMLRLFHKGEMVAEVPADALAEEAPIYHKPSQEAAYFAEFQQMKMETPKVENYKETLFALLQQPTIASKEWVYDQYDYQVRTSTVVTPGSDAAVVRVRGTEKGLAMTTDCNSRYIYLDPEMGGKIAVAEAARNIVCSGGEPLAITDCLNFGNPEKPEIFWQIEKSVDGMSEACRTLQTPVIGGNVSMYNERSGEAVYPTPTVGMVGLVHDLKHVTTQEFKQAGDLVYIIGETKAEFGGSELQKMLHGKIFGQSPSIDLDVELKRQKQVLAAIQAGLVQSAHDVAEGGLAVAISESAIGANGLGATVKLDGEATAALFAESQSRFVITVKRENKEAFEKAVEAIQVGEVTNTNEVTIHNEENEVLLTANVDEMRKAWKGAIPCLLK</sequence>
<name>PURL_BACC7</name>
<protein>
    <recommendedName>
        <fullName evidence="1">Phosphoribosylformylglycinamidine synthase subunit PurL</fullName>
        <shortName evidence="1">FGAM synthase</shortName>
        <ecNumber evidence="1">6.3.5.3</ecNumber>
    </recommendedName>
    <alternativeName>
        <fullName evidence="1">Formylglycinamide ribonucleotide amidotransferase subunit II</fullName>
        <shortName evidence="1">FGAR amidotransferase II</shortName>
        <shortName evidence="1">FGAR-AT II</shortName>
    </alternativeName>
    <alternativeName>
        <fullName evidence="1">Glutamine amidotransferase PurL</fullName>
    </alternativeName>
    <alternativeName>
        <fullName evidence="1">Phosphoribosylformylglycinamidine synthase subunit II</fullName>
    </alternativeName>
</protein>
<evidence type="ECO:0000255" key="1">
    <source>
        <dbReference type="HAMAP-Rule" id="MF_00420"/>
    </source>
</evidence>
<comment type="function">
    <text evidence="1">Part of the phosphoribosylformylglycinamidine synthase complex involved in the purines biosynthetic pathway. Catalyzes the ATP-dependent conversion of formylglycinamide ribonucleotide (FGAR) and glutamine to yield formylglycinamidine ribonucleotide (FGAM) and glutamate. The FGAM synthase complex is composed of three subunits. PurQ produces an ammonia molecule by converting glutamine to glutamate. PurL transfers the ammonia molecule to FGAR to form FGAM in an ATP-dependent manner. PurS interacts with PurQ and PurL and is thought to assist in the transfer of the ammonia molecule from PurQ to PurL.</text>
</comment>
<comment type="catalytic activity">
    <reaction evidence="1">
        <text>N(2)-formyl-N(1)-(5-phospho-beta-D-ribosyl)glycinamide + L-glutamine + ATP + H2O = 2-formamido-N(1)-(5-O-phospho-beta-D-ribosyl)acetamidine + L-glutamate + ADP + phosphate + H(+)</text>
        <dbReference type="Rhea" id="RHEA:17129"/>
        <dbReference type="ChEBI" id="CHEBI:15377"/>
        <dbReference type="ChEBI" id="CHEBI:15378"/>
        <dbReference type="ChEBI" id="CHEBI:29985"/>
        <dbReference type="ChEBI" id="CHEBI:30616"/>
        <dbReference type="ChEBI" id="CHEBI:43474"/>
        <dbReference type="ChEBI" id="CHEBI:58359"/>
        <dbReference type="ChEBI" id="CHEBI:147286"/>
        <dbReference type="ChEBI" id="CHEBI:147287"/>
        <dbReference type="ChEBI" id="CHEBI:456216"/>
        <dbReference type="EC" id="6.3.5.3"/>
    </reaction>
</comment>
<comment type="pathway">
    <text evidence="1">Purine metabolism; IMP biosynthesis via de novo pathway; 5-amino-1-(5-phospho-D-ribosyl)imidazole from N(2)-formyl-N(1)-(5-phospho-D-ribosyl)glycinamide: step 1/2.</text>
</comment>
<comment type="subunit">
    <text evidence="1">Monomer. Part of the FGAM synthase complex composed of 1 PurL, 1 PurQ and 2 PurS subunits.</text>
</comment>
<comment type="subcellular location">
    <subcellularLocation>
        <location evidence="1">Cytoplasm</location>
    </subcellularLocation>
</comment>
<comment type="similarity">
    <text evidence="1">Belongs to the FGAMS family.</text>
</comment>